<proteinExistence type="evidence at protein level"/>
<organism>
    <name type="scientific">Mus musculus</name>
    <name type="common">Mouse</name>
    <dbReference type="NCBI Taxonomy" id="10090"/>
    <lineage>
        <taxon>Eukaryota</taxon>
        <taxon>Metazoa</taxon>
        <taxon>Chordata</taxon>
        <taxon>Craniata</taxon>
        <taxon>Vertebrata</taxon>
        <taxon>Euteleostomi</taxon>
        <taxon>Mammalia</taxon>
        <taxon>Eutheria</taxon>
        <taxon>Euarchontoglires</taxon>
        <taxon>Glires</taxon>
        <taxon>Rodentia</taxon>
        <taxon>Myomorpha</taxon>
        <taxon>Muroidea</taxon>
        <taxon>Muridae</taxon>
        <taxon>Murinae</taxon>
        <taxon>Mus</taxon>
        <taxon>Mus</taxon>
    </lineage>
</organism>
<keyword id="KW-0002">3D-structure</keyword>
<keyword id="KW-0007">Acetylation</keyword>
<keyword id="KW-0024">Alternative initiation</keyword>
<keyword id="KW-0156">Chromatin regulator</keyword>
<keyword id="KW-0158">Chromosome</keyword>
<keyword id="KW-0488">Methylation</keyword>
<keyword id="KW-0539">Nucleus</keyword>
<keyword id="KW-0597">Phosphoprotein</keyword>
<keyword id="KW-1185">Reference proteome</keyword>
<keyword id="KW-0677">Repeat</keyword>
<keyword id="KW-0678">Repressor</keyword>
<keyword id="KW-0804">Transcription</keyword>
<keyword id="KW-0805">Transcription regulation</keyword>
<keyword id="KW-0853">WD repeat</keyword>
<comment type="function">
    <text evidence="2 4 5 6 7 8 9 11 13 14 15 17 18 23 24">Polycomb group (PcG) protein. Component of the PRC2/EED-EZH2 complex, which methylates 'Lys-9' and 'Lys-27' of histone H3, leading to transcriptional repression of the affected target gene. Also recognizes 'Lys-26' trimethylated histone H1 with the effect of inhibiting PRC2 complex methyltransferase activity on nucleosomal histone H3 'Lys-27', whereas H3 'Lys-27' recognition has the opposite effect, enabling the propagation of this repressive mark (By similarity). The PRC2/EED-EZH2 complex may also serve as a recruiting platform for DNA methyltransferases, thereby linking two epigenetic repression systems (By similarity). Genes repressed by the PRC2/EED-EZH2 complex include HOXA7, HOXB6 and HOXC8. Plays a role in X chromosome inactivation (XCI), in which one of the two X chromosomes in female mammals is transcriptionally silenced to equalize X-linked gene dosage with XY males. Required for stable maintenance of XCI in both embryonic and extraembryonic tissues. May prevent transcriptional activation of facultative heterochromatin during differentiation. Required for development of secondary trophoblast giant cells during placental development. May regulate hippocampal synaptic plasticity in the developing brain.</text>
</comment>
<comment type="subunit">
    <text evidence="2 12 15 16 17 19 20 21 24">Component of the PRC2/EED-EZH2 complex, which includes EED, EZH2, SUZ12, RBBP4 and RBBP7 and possibly AEBP2 (By similarity). The minimum components required for methyltransferase activity of the PRC2/EED-EZH2 complex are EED, EZH2 and SUZ12 (By similarity). Component of the PRC2/EED-EZH1 complex, which includes EED, EZH1, SUZ12, RBBP4 and AEBP2. The PRC2 complex may also interact with DNMT1, DNMT3A, DNMT3B and PHF1 via the EZH2 subunit and with SIRT1 via the SUZ12 subunit (By similarity). Interacts with HDAC, HDAC2, histone H1 and YY1 (By similarity). May interact with ITGA4, ITGAE and ITGB7 (By similarity). Interacts with CDYL (By similarity). Interacts with EZH2. Interacts with KMT2A/MLL1 in adult brain. Interacts with BMAL1.</text>
</comment>
<comment type="interaction">
    <interactant intactId="EBI-904301">
        <id>Q921E6</id>
    </interactant>
    <interactant intactId="EBI-16024836">
        <id>Q7TNS8</id>
        <label>Epop</label>
    </interactant>
    <organismsDiffer>false</organismsDiffer>
    <experiments>2</experiments>
</comment>
<comment type="interaction">
    <interactant intactId="EBI-904301">
        <id>Q921E6</id>
    </interactant>
    <interactant intactId="EBI-904311">
        <id>Q61188</id>
        <label>Ezh2</label>
    </interactant>
    <organismsDiffer>false</organismsDiffer>
    <experiments>9</experiments>
</comment>
<comment type="interaction">
    <interactant intactId="EBI-904301">
        <id>Q921E6</id>
    </interactant>
    <interactant intactId="EBI-15665134">
        <id>Q61188-1</id>
        <label>Ezh2</label>
    </interactant>
    <organismsDiffer>false</organismsDiffer>
    <experiments>5</experiments>
</comment>
<comment type="interaction">
    <interactant intactId="EBI-904301">
        <id>Q921E6</id>
    </interactant>
    <interactant intactId="EBI-493592">
        <id>Q62315</id>
        <label>Jarid2</label>
    </interactant>
    <organismsDiffer>false</organismsDiffer>
    <experiments>11</experiments>
</comment>
<comment type="interaction">
    <interactant intactId="EBI-904301">
        <id>Q921E6</id>
    </interactant>
    <interactant intactId="EBI-2531578">
        <id>Q02395</id>
        <label>Mtf2</label>
    </interactant>
    <organismsDiffer>false</organismsDiffer>
    <experiments>3</experiments>
</comment>
<comment type="subcellular location">
    <subcellularLocation>
        <location>Nucleus</location>
    </subcellularLocation>
    <subcellularLocation>
        <location>Chromosome</location>
    </subcellularLocation>
    <text>Localizes to the inactive X chromosome in cells of the early embryo and in stem cells of the extraembryonic trophectoderm lineage. Recruitment to the inactive X-chromosome requires XIST.</text>
</comment>
<comment type="alternative products">
    <event type="alternative initiation"/>
    <isoform>
        <id>Q921E6-1</id>
        <name>1</name>
        <name>EED-3</name>
        <sequence type="displayed"/>
    </isoform>
    <isoform>
        <id>Q921E6-2</id>
        <name>2</name>
        <name>EED-1</name>
        <sequence type="described" ref="VSP_034694"/>
    </isoform>
    <isoform>
        <id>Q921E6-3</id>
        <name>3</name>
        <name>EED-4</name>
        <sequence type="described" ref="VSP_034693"/>
    </isoform>
    <text evidence="17 23">Additional isoforms may be produced by alternative initiation from other non-canonical start codons but their precise positions have not been unambiguously determined.</text>
</comment>
<comment type="tissue specificity">
    <text evidence="15 22 23">Expressed in brain, heart, kidney, liver, lung, muscle, ovary, spleen and testis. Expressed throughout the brain.</text>
</comment>
<comment type="developmental stage">
    <text evidence="8 10 22">Maternally expressed. Expressed from 5.5 dpc, and expression remains high throughout development. Expression decreases during differentiation of embryonic stem cells (ES cells). Expression increases in prostate during prostate tumor development.</text>
</comment>
<comment type="induction">
    <text evidence="18">Induced in embryonic stem cells (ES cells) by STAT3 and POU5F1.</text>
</comment>
<comment type="domain">
    <text evidence="1">The WD repeat domain mediates recognition of trimethylated histone peptides at the consensus sequence Ala-Arg-Lys-Ser. This is achieved through an aromatic cage encircling the methyllysine, and involving Phe-97, Tyr-148 and Tyr-365 (By similarity).</text>
</comment>
<comment type="PTM">
    <text evidence="1">Methylated. Binding to histone H1 'Lys-26' promotes mono-, di-, and trimethylation of internal lysines (By similarity).</text>
</comment>
<comment type="miscellaneous">
    <text>Mice homozygous for a null allele of this protein (Pro-196) exhibit disrupted anterior posterior patterning of the primitive streak during gastrulation and reduced numbers of trophoblast giant cells. Mice homozygous for a hypomorphic allele of this protein (Asn-193) exhibit posterior transformations along the axial skeleton and altered patterns of Hox gene expression.</text>
</comment>
<comment type="miscellaneous">
    <molecule>Isoform 2</molecule>
    <text evidence="28">Translation initiates from a non-canonical start codon (GUG).</text>
</comment>
<comment type="similarity">
    <text evidence="28">Belongs to the WD repeat ESC family.</text>
</comment>
<comment type="caution">
    <text evidence="29">Was originally thought (PubMed:9234727) to interact with HNRNPK. This apparent interaction may be mediated by the translated product of the 5'-UTR sequence of the 2-hybrid clone.</text>
</comment>
<comment type="sequence caution" evidence="28">
    <conflict type="erroneous initiation">
        <sequence resource="EMBL-CDS" id="AAB38319"/>
    </conflict>
    <text>Truncated N-terminus.</text>
</comment>
<comment type="sequence caution" evidence="28">
    <conflict type="erroneous initiation">
        <sequence resource="EMBL-CDS" id="AAC53302"/>
    </conflict>
    <text>Truncated N-terminus.</text>
</comment>
<comment type="sequence caution" evidence="28">
    <conflict type="erroneous initiation">
        <sequence resource="EMBL-CDS" id="AAH12966"/>
    </conflict>
    <text>Truncated N-terminus.</text>
</comment>
<name>EED_MOUSE</name>
<feature type="initiator methionine" description="Removed" evidence="2">
    <location>
        <position position="1"/>
    </location>
</feature>
<feature type="chain" id="PRO_0000343726" description="Polycomb protein EED">
    <location>
        <begin position="2"/>
        <end position="441"/>
    </location>
</feature>
<feature type="repeat" description="WD 1">
    <location>
        <begin position="91"/>
        <end position="134"/>
    </location>
</feature>
<feature type="repeat" description="WD 2">
    <location>
        <begin position="142"/>
        <end position="185"/>
    </location>
</feature>
<feature type="repeat" description="WD 3">
    <location>
        <begin position="188"/>
        <end position="228"/>
    </location>
</feature>
<feature type="repeat" description="WD 4">
    <location>
        <begin position="234"/>
        <end position="275"/>
    </location>
</feature>
<feature type="repeat" description="WD 5">
    <location>
        <begin position="304"/>
        <end position="341"/>
    </location>
</feature>
<feature type="repeat" description="WD 6">
    <location>
        <begin position="359"/>
        <end position="399"/>
    </location>
</feature>
<feature type="repeat" description="WD 7">
    <location>
        <begin position="408"/>
        <end position="441"/>
    </location>
</feature>
<feature type="region of interest" description="Disordered" evidence="3">
    <location>
        <begin position="1"/>
        <end position="72"/>
    </location>
</feature>
<feature type="region of interest" description="Interaction with EZH2">
    <location>
        <begin position="81"/>
        <end position="441"/>
    </location>
</feature>
<feature type="compositionally biased region" description="Polar residues" evidence="3">
    <location>
        <begin position="45"/>
        <end position="61"/>
    </location>
</feature>
<feature type="modified residue" description="N-acetylserine" evidence="2">
    <location>
        <position position="2"/>
    </location>
</feature>
<feature type="modified residue" description="Phosphoserine" evidence="2">
    <location>
        <position position="2"/>
    </location>
</feature>
<feature type="modified residue" description="Phosphoserine" evidence="30">
    <location>
        <position position="34"/>
    </location>
</feature>
<feature type="modified residue" description="Phosphothreonine" evidence="2">
    <location>
        <position position="55"/>
    </location>
</feature>
<feature type="modified residue" description="N6,N6,N6-trimethyllysine; alternate" evidence="2">
    <location>
        <position position="66"/>
    </location>
</feature>
<feature type="modified residue" description="N6,N6-dimethyllysine; alternate" evidence="2">
    <location>
        <position position="66"/>
    </location>
</feature>
<feature type="modified residue" description="N6-methyllysine; alternate" evidence="2">
    <location>
        <position position="66"/>
    </location>
</feature>
<feature type="modified residue" description="N6,N6,N6-trimethyllysine; alternate" evidence="2">
    <location>
        <position position="197"/>
    </location>
</feature>
<feature type="modified residue" description="N6,N6-dimethyllysine; alternate" evidence="2">
    <location>
        <position position="197"/>
    </location>
</feature>
<feature type="modified residue" description="N6-methyllysine; alternate" evidence="2">
    <location>
        <position position="197"/>
    </location>
</feature>
<feature type="modified residue" description="N6,N6,N6-trimethyllysine; alternate" evidence="2">
    <location>
        <position position="268"/>
    </location>
</feature>
<feature type="modified residue" description="N6,N6-dimethyllysine; alternate" evidence="2">
    <location>
        <position position="268"/>
    </location>
</feature>
<feature type="modified residue" description="N6-methyllysine; alternate" evidence="2">
    <location>
        <position position="268"/>
    </location>
</feature>
<feature type="modified residue" description="N6,N6,N6-trimethyllysine; alternate" evidence="2">
    <location>
        <position position="284"/>
    </location>
</feature>
<feature type="modified residue" description="N6,N6-dimethyllysine; alternate" evidence="2">
    <location>
        <position position="284"/>
    </location>
</feature>
<feature type="modified residue" description="N6-methyllysine; alternate" evidence="2">
    <location>
        <position position="284"/>
    </location>
</feature>
<feature type="splice variant" id="VSP_034693" description="In isoform 3." evidence="28">
    <location>
        <begin position="1"/>
        <end position="14"/>
    </location>
</feature>
<feature type="splice variant" id="VSP_034694" description="In isoform 2." evidence="25 26 27">
    <original>M</original>
    <variation>MAGSHARPPRRLGAICDSGGSGGGGGAGSFAAGSGRACLTAVWRRPRPRRQEPGGRRRNM</variation>
    <location>
        <position position="1"/>
    </location>
</feature>
<feature type="mutagenesis site" description="Hypomorphic allele. Abrogates interaction with EZH2 and impairs transcriptional repression." evidence="23 24">
    <original>I</original>
    <variation>N</variation>
    <location>
        <position position="193"/>
    </location>
</feature>
<feature type="mutagenesis site" description="Null allele. Abrogates interaction with EZH2 and impairs transcriptional repression." evidence="15 23 24">
    <original>L</original>
    <variation>P</variation>
    <location>
        <position position="196"/>
    </location>
</feature>
<feature type="mutagenesis site" description="Abrogates interaction with EZH2." evidence="16">
    <original>L</original>
    <variation>E</variation>
    <location>
        <position position="246"/>
    </location>
</feature>
<feature type="mutagenesis site" description="Impairs interaction with EZH2." evidence="16">
    <original>L</original>
    <variation>E</variation>
    <location>
        <position position="315"/>
    </location>
</feature>
<feature type="mutagenesis site" description="Impairs interaction with EZH2." evidence="16">
    <original>G</original>
    <variation>A</variation>
    <location>
        <position position="316"/>
    </location>
</feature>
<feature type="strand" evidence="31">
    <location>
        <begin position="83"/>
        <end position="89"/>
    </location>
</feature>
<feature type="strand" evidence="31">
    <location>
        <begin position="98"/>
        <end position="101"/>
    </location>
</feature>
<feature type="strand" evidence="31">
    <location>
        <begin position="112"/>
        <end position="117"/>
    </location>
</feature>
<feature type="strand" evidence="31">
    <location>
        <begin position="120"/>
        <end position="126"/>
    </location>
</feature>
<feature type="strand" evidence="31">
    <location>
        <begin position="132"/>
        <end position="139"/>
    </location>
</feature>
<feature type="strand" evidence="31">
    <location>
        <begin position="147"/>
        <end position="154"/>
    </location>
</feature>
<feature type="turn" evidence="31">
    <location>
        <begin position="156"/>
        <end position="158"/>
    </location>
</feature>
<feature type="strand" evidence="31">
    <location>
        <begin position="161"/>
        <end position="167"/>
    </location>
</feature>
<feature type="strand" evidence="31">
    <location>
        <begin position="172"/>
        <end position="176"/>
    </location>
</feature>
<feature type="turn" evidence="31">
    <location>
        <begin position="177"/>
        <end position="180"/>
    </location>
</feature>
<feature type="strand" evidence="31">
    <location>
        <begin position="181"/>
        <end position="186"/>
    </location>
</feature>
<feature type="strand" evidence="31">
    <location>
        <begin position="193"/>
        <end position="198"/>
    </location>
</feature>
<feature type="strand" evidence="31">
    <location>
        <begin position="205"/>
        <end position="210"/>
    </location>
</feature>
<feature type="strand" evidence="31">
    <location>
        <begin position="215"/>
        <end position="219"/>
    </location>
</feature>
<feature type="turn" evidence="31">
    <location>
        <begin position="220"/>
        <end position="223"/>
    </location>
</feature>
<feature type="strand" evidence="31">
    <location>
        <begin position="224"/>
        <end position="229"/>
    </location>
</feature>
<feature type="strand" evidence="31">
    <location>
        <begin position="239"/>
        <end position="244"/>
    </location>
</feature>
<feature type="strand" evidence="31">
    <location>
        <begin position="248"/>
        <end position="255"/>
    </location>
</feature>
<feature type="strand" evidence="31">
    <location>
        <begin position="260"/>
        <end position="267"/>
    </location>
</feature>
<feature type="helix" evidence="31">
    <location>
        <begin position="268"/>
        <end position="279"/>
    </location>
</feature>
<feature type="strand" evidence="31">
    <location>
        <begin position="292"/>
        <end position="294"/>
    </location>
</feature>
<feature type="strand" evidence="31">
    <location>
        <begin position="298"/>
        <end position="301"/>
    </location>
</feature>
<feature type="strand" evidence="31">
    <location>
        <begin position="311"/>
        <end position="315"/>
    </location>
</feature>
<feature type="strand" evidence="31">
    <location>
        <begin position="318"/>
        <end position="322"/>
    </location>
</feature>
<feature type="strand" evidence="31">
    <location>
        <begin position="324"/>
        <end position="335"/>
    </location>
</feature>
<feature type="turn" evidence="31">
    <location>
        <begin position="340"/>
        <end position="342"/>
    </location>
</feature>
<feature type="strand" evidence="31">
    <location>
        <begin position="350"/>
        <end position="357"/>
    </location>
</feature>
<feature type="strand" evidence="31">
    <location>
        <begin position="368"/>
        <end position="370"/>
    </location>
</feature>
<feature type="strand" evidence="31">
    <location>
        <begin position="376"/>
        <end position="380"/>
    </location>
</feature>
<feature type="strand" evidence="31">
    <location>
        <begin position="386"/>
        <end position="390"/>
    </location>
</feature>
<feature type="strand" evidence="31">
    <location>
        <begin position="393"/>
        <end position="395"/>
    </location>
</feature>
<feature type="helix" evidence="31">
    <location>
        <begin position="396"/>
        <end position="398"/>
    </location>
</feature>
<feature type="strand" evidence="31">
    <location>
        <begin position="401"/>
        <end position="404"/>
    </location>
</feature>
<feature type="strand" evidence="31">
    <location>
        <begin position="413"/>
        <end position="418"/>
    </location>
</feature>
<feature type="strand" evidence="31">
    <location>
        <begin position="422"/>
        <end position="429"/>
    </location>
</feature>
<feature type="strand" evidence="31">
    <location>
        <begin position="432"/>
        <end position="438"/>
    </location>
</feature>
<dbReference type="EMBL" id="U78103">
    <property type="protein sequence ID" value="AAB38319.1"/>
    <property type="status" value="ALT_INIT"/>
    <property type="molecule type" value="mRNA"/>
</dbReference>
<dbReference type="EMBL" id="U97675">
    <property type="protein sequence ID" value="AAC53302.1"/>
    <property type="status" value="ALT_INIT"/>
    <property type="molecule type" value="mRNA"/>
</dbReference>
<dbReference type="EMBL" id="AK077664">
    <property type="protein sequence ID" value="BAC36938.1"/>
    <property type="molecule type" value="mRNA"/>
</dbReference>
<dbReference type="EMBL" id="AK131976">
    <property type="protein sequence ID" value="BAE20916.1"/>
    <property type="molecule type" value="mRNA"/>
</dbReference>
<dbReference type="EMBL" id="AK133890">
    <property type="protein sequence ID" value="BAE21915.1"/>
    <property type="molecule type" value="mRNA"/>
</dbReference>
<dbReference type="EMBL" id="BC012966">
    <property type="protein sequence ID" value="AAH12966.1"/>
    <property type="status" value="ALT_INIT"/>
    <property type="molecule type" value="mRNA"/>
</dbReference>
<dbReference type="CCDS" id="CCDS40016.1">
    <molecule id="Q921E6-1"/>
</dbReference>
<dbReference type="RefSeq" id="NP_068676.1">
    <molecule id="Q921E6-1"/>
    <property type="nucleotide sequence ID" value="NM_021876.3"/>
</dbReference>
<dbReference type="PDB" id="2QXV">
    <property type="method" value="X-ray"/>
    <property type="resolution" value="1.82 A"/>
    <property type="chains" value="A=81-441"/>
</dbReference>
<dbReference type="PDBsum" id="2QXV"/>
<dbReference type="SMR" id="Q921E6"/>
<dbReference type="BioGRID" id="199384">
    <property type="interactions" value="1180"/>
</dbReference>
<dbReference type="CORUM" id="Q921E6"/>
<dbReference type="DIP" id="DIP-29523N"/>
<dbReference type="FunCoup" id="Q921E6">
    <property type="interactions" value="4501"/>
</dbReference>
<dbReference type="IntAct" id="Q921E6">
    <property type="interactions" value="49"/>
</dbReference>
<dbReference type="MINT" id="Q921E6"/>
<dbReference type="STRING" id="10090.ENSMUSP00000102853"/>
<dbReference type="iPTMnet" id="Q921E6"/>
<dbReference type="PhosphoSitePlus" id="Q921E6"/>
<dbReference type="PaxDb" id="10090-ENSMUSP00000102853"/>
<dbReference type="PeptideAtlas" id="Q921E6"/>
<dbReference type="ProteomicsDB" id="277716">
    <molecule id="Q921E6-1"/>
</dbReference>
<dbReference type="ProteomicsDB" id="277717">
    <molecule id="Q921E6-2"/>
</dbReference>
<dbReference type="ProteomicsDB" id="277718">
    <molecule id="Q921E6-3"/>
</dbReference>
<dbReference type="Pumba" id="Q921E6"/>
<dbReference type="Antibodypedia" id="31435">
    <property type="antibodies" value="386 antibodies from 40 providers"/>
</dbReference>
<dbReference type="DNASU" id="13626"/>
<dbReference type="Ensembl" id="ENSMUST00000107234.3">
    <molecule id="Q921E6-1"/>
    <property type="protein sequence ID" value="ENSMUSP00000102853.2"/>
    <property type="gene ID" value="ENSMUSG00000030619.11"/>
</dbReference>
<dbReference type="Ensembl" id="ENSMUST00000238981.2">
    <molecule id="Q921E6-1"/>
    <property type="protein sequence ID" value="ENSMUSP00000159149.2"/>
    <property type="gene ID" value="ENSMUSG00000030619.11"/>
</dbReference>
<dbReference type="GeneID" id="13626"/>
<dbReference type="KEGG" id="mmu:13626"/>
<dbReference type="UCSC" id="uc009igk.2">
    <molecule id="Q921E6-1"/>
    <property type="organism name" value="mouse"/>
</dbReference>
<dbReference type="AGR" id="MGI:95286"/>
<dbReference type="CTD" id="8726"/>
<dbReference type="MGI" id="MGI:95286">
    <property type="gene designation" value="Eed"/>
</dbReference>
<dbReference type="VEuPathDB" id="HostDB:ENSMUSG00000030619"/>
<dbReference type="eggNOG" id="KOG1034">
    <property type="taxonomic scope" value="Eukaryota"/>
</dbReference>
<dbReference type="GeneTree" id="ENSGT00510000047334"/>
<dbReference type="HOGENOM" id="CLU_032683_1_0_1"/>
<dbReference type="InParanoid" id="Q921E6"/>
<dbReference type="OMA" id="RDVHRNY"/>
<dbReference type="OrthoDB" id="10497at9989"/>
<dbReference type="PhylomeDB" id="Q921E6"/>
<dbReference type="TreeFam" id="TF314451"/>
<dbReference type="Reactome" id="R-MMU-212300">
    <property type="pathway name" value="PRC2 methylates histones and DNA"/>
</dbReference>
<dbReference type="Reactome" id="R-MMU-2559580">
    <property type="pathway name" value="Oxidative Stress Induced Senescence"/>
</dbReference>
<dbReference type="Reactome" id="R-MMU-3214841">
    <property type="pathway name" value="PKMTs methylate histone lysines"/>
</dbReference>
<dbReference type="Reactome" id="R-MMU-8953750">
    <property type="pathway name" value="Transcriptional Regulation by E2F6"/>
</dbReference>
<dbReference type="BioGRID-ORCS" id="13626">
    <property type="hits" value="18 hits in 87 CRISPR screens"/>
</dbReference>
<dbReference type="ChiTaRS" id="Eed">
    <property type="organism name" value="mouse"/>
</dbReference>
<dbReference type="EvolutionaryTrace" id="Q921E6"/>
<dbReference type="PRO" id="PR:Q921E6"/>
<dbReference type="Proteomes" id="UP000000589">
    <property type="component" value="Chromosome 7"/>
</dbReference>
<dbReference type="RNAct" id="Q921E6">
    <property type="molecule type" value="protein"/>
</dbReference>
<dbReference type="Bgee" id="ENSMUSG00000030619">
    <property type="expression patterns" value="Expressed in animal zygote and 274 other cell types or tissues"/>
</dbReference>
<dbReference type="ExpressionAtlas" id="Q921E6">
    <property type="expression patterns" value="baseline and differential"/>
</dbReference>
<dbReference type="GO" id="GO:0005677">
    <property type="term" value="C:chromatin silencing complex"/>
    <property type="evidence" value="ECO:0000314"/>
    <property type="project" value="MGI"/>
</dbReference>
<dbReference type="GO" id="GO:0005829">
    <property type="term" value="C:cytosol"/>
    <property type="evidence" value="ECO:0007669"/>
    <property type="project" value="Ensembl"/>
</dbReference>
<dbReference type="GO" id="GO:0035098">
    <property type="term" value="C:ESC/E(Z) complex"/>
    <property type="evidence" value="ECO:0000314"/>
    <property type="project" value="UniProtKB"/>
</dbReference>
<dbReference type="GO" id="GO:0005654">
    <property type="term" value="C:nucleoplasm"/>
    <property type="evidence" value="ECO:0000304"/>
    <property type="project" value="Reactome"/>
</dbReference>
<dbReference type="GO" id="GO:0005634">
    <property type="term" value="C:nucleus"/>
    <property type="evidence" value="ECO:0000314"/>
    <property type="project" value="MGI"/>
</dbReference>
<dbReference type="GO" id="GO:0005886">
    <property type="term" value="C:plasma membrane"/>
    <property type="evidence" value="ECO:0000266"/>
    <property type="project" value="MGI"/>
</dbReference>
<dbReference type="GO" id="GO:0045120">
    <property type="term" value="C:pronucleus"/>
    <property type="evidence" value="ECO:0000314"/>
    <property type="project" value="MGI"/>
</dbReference>
<dbReference type="GO" id="GO:0001739">
    <property type="term" value="C:sex chromatin"/>
    <property type="evidence" value="ECO:0000314"/>
    <property type="project" value="MGI"/>
</dbReference>
<dbReference type="GO" id="GO:0003682">
    <property type="term" value="F:chromatin binding"/>
    <property type="evidence" value="ECO:0000314"/>
    <property type="project" value="MGI"/>
</dbReference>
<dbReference type="GO" id="GO:0008047">
    <property type="term" value="F:enzyme activator activity"/>
    <property type="evidence" value="ECO:0000315"/>
    <property type="project" value="MGI"/>
</dbReference>
<dbReference type="GO" id="GO:0042802">
    <property type="term" value="F:identical protein binding"/>
    <property type="evidence" value="ECO:0007669"/>
    <property type="project" value="Ensembl"/>
</dbReference>
<dbReference type="GO" id="GO:0035064">
    <property type="term" value="F:methylated histone binding"/>
    <property type="evidence" value="ECO:0000314"/>
    <property type="project" value="MGI"/>
</dbReference>
<dbReference type="GO" id="GO:0016230">
    <property type="term" value="F:sphingomyelin phosphodiesterase activator activity"/>
    <property type="evidence" value="ECO:0000266"/>
    <property type="project" value="MGI"/>
</dbReference>
<dbReference type="GO" id="GO:0001222">
    <property type="term" value="F:transcription corepressor binding"/>
    <property type="evidence" value="ECO:0007669"/>
    <property type="project" value="Ensembl"/>
</dbReference>
<dbReference type="GO" id="GO:1990830">
    <property type="term" value="P:cellular response to leukemia inhibitory factor"/>
    <property type="evidence" value="ECO:0000270"/>
    <property type="project" value="MGI"/>
</dbReference>
<dbReference type="GO" id="GO:0140718">
    <property type="term" value="P:facultative heterochromatin formation"/>
    <property type="evidence" value="ECO:0000314"/>
    <property type="project" value="GO_Central"/>
</dbReference>
<dbReference type="GO" id="GO:0071514">
    <property type="term" value="P:genomic imprinting"/>
    <property type="evidence" value="ECO:0000315"/>
    <property type="project" value="MGI"/>
</dbReference>
<dbReference type="GO" id="GO:0000122">
    <property type="term" value="P:negative regulation of transcription by RNA polymerase II"/>
    <property type="evidence" value="ECO:0000315"/>
    <property type="project" value="MGI"/>
</dbReference>
<dbReference type="GO" id="GO:0048709">
    <property type="term" value="P:oligodendrocyte differentiation"/>
    <property type="evidence" value="ECO:0000315"/>
    <property type="project" value="MGI"/>
</dbReference>
<dbReference type="GO" id="GO:0034250">
    <property type="term" value="P:positive regulation of amide metabolic process"/>
    <property type="evidence" value="ECO:0000266"/>
    <property type="project" value="MGI"/>
</dbReference>
<dbReference type="GO" id="GO:0045834">
    <property type="term" value="P:positive regulation of lipid metabolic process"/>
    <property type="evidence" value="ECO:0000266"/>
    <property type="project" value="MGI"/>
</dbReference>
<dbReference type="GO" id="GO:2000011">
    <property type="term" value="P:regulation of adaxial/abaxial pattern formation"/>
    <property type="evidence" value="ECO:0000316"/>
    <property type="project" value="MGI"/>
</dbReference>
<dbReference type="GO" id="GO:1905038">
    <property type="term" value="P:regulation of membrane lipid metabolic process"/>
    <property type="evidence" value="ECO:0000266"/>
    <property type="project" value="MGI"/>
</dbReference>
<dbReference type="GO" id="GO:0021510">
    <property type="term" value="P:spinal cord development"/>
    <property type="evidence" value="ECO:0007669"/>
    <property type="project" value="Ensembl"/>
</dbReference>
<dbReference type="GO" id="GO:0033209">
    <property type="term" value="P:tumor necrosis factor-mediated signaling pathway"/>
    <property type="evidence" value="ECO:0000266"/>
    <property type="project" value="MGI"/>
</dbReference>
<dbReference type="FunFam" id="2.130.10.10:FF:000056">
    <property type="entry name" value="Polycomb protein eed"/>
    <property type="match status" value="1"/>
</dbReference>
<dbReference type="Gene3D" id="2.130.10.10">
    <property type="entry name" value="YVTN repeat-like/Quinoprotein amine dehydrogenase"/>
    <property type="match status" value="1"/>
</dbReference>
<dbReference type="InterPro" id="IPR051243">
    <property type="entry name" value="PcG_WD-repeat"/>
</dbReference>
<dbReference type="InterPro" id="IPR015943">
    <property type="entry name" value="WD40/YVTN_repeat-like_dom_sf"/>
</dbReference>
<dbReference type="InterPro" id="IPR019775">
    <property type="entry name" value="WD40_repeat_CS"/>
</dbReference>
<dbReference type="InterPro" id="IPR036322">
    <property type="entry name" value="WD40_repeat_dom_sf"/>
</dbReference>
<dbReference type="InterPro" id="IPR001680">
    <property type="entry name" value="WD40_rpt"/>
</dbReference>
<dbReference type="PANTHER" id="PTHR10253">
    <property type="entry name" value="POLYCOMB PROTEIN"/>
    <property type="match status" value="1"/>
</dbReference>
<dbReference type="Pfam" id="PF00400">
    <property type="entry name" value="WD40"/>
    <property type="match status" value="3"/>
</dbReference>
<dbReference type="SMART" id="SM00320">
    <property type="entry name" value="WD40"/>
    <property type="match status" value="6"/>
</dbReference>
<dbReference type="SUPFAM" id="SSF50978">
    <property type="entry name" value="WD40 repeat-like"/>
    <property type="match status" value="1"/>
</dbReference>
<dbReference type="PROSITE" id="PS00678">
    <property type="entry name" value="WD_REPEATS_1"/>
    <property type="match status" value="1"/>
</dbReference>
<dbReference type="PROSITE" id="PS50082">
    <property type="entry name" value="WD_REPEATS_2"/>
    <property type="match status" value="2"/>
</dbReference>
<dbReference type="PROSITE" id="PS50294">
    <property type="entry name" value="WD_REPEATS_REGION"/>
    <property type="match status" value="1"/>
</dbReference>
<gene>
    <name type="primary">Eed</name>
</gene>
<accession>Q921E6</accession>
<accession>P97462</accession>
<reference key="1">
    <citation type="journal article" date="1996" name="Nature">
        <title>Positional cloning of a global regulator of anterior-posterior patterning in mice.</title>
        <authorList>
            <person name="Shumacher A."/>
            <person name="Faust C."/>
            <person name="Magnuson T."/>
        </authorList>
    </citation>
    <scope>NUCLEOTIDE SEQUENCE [MRNA] (ISOFORM 2)</scope>
    <scope>CHARACTERIZATION OF MUTANTS ASN-193 AND PRO-196</scope>
    <scope>TISSUE SPECIFICITY</scope>
    <scope>DEVELOPMENTAL STAGE</scope>
    <source>
        <strain>Swiss Webster</strain>
    </source>
</reference>
<reference key="2">
    <citation type="journal article" date="1996" name="Nature">
        <authorList>
            <person name="Schumacher A."/>
            <person name="Faust C."/>
            <person name="Magnuson T."/>
        </authorList>
    </citation>
    <scope>ERRATUM OF PUBMED:8805699</scope>
</reference>
<reference key="3">
    <citation type="journal article" date="1997" name="Mol. Cell. Biol.">
        <title>The product of the murine homolog of the Drosophila extra sex combs gene displays transcriptional repressor activity.</title>
        <authorList>
            <person name="Denisenko O.N."/>
            <person name="Bomsztyk K."/>
        </authorList>
    </citation>
    <scope>NUCLEOTIDE SEQUENCE [MRNA] (ISOFORM 2)</scope>
    <scope>FUNCTION</scope>
    <scope>ALTERNATIVE INITIATION</scope>
    <scope>TISSUE SPECIFICITY</scope>
    <scope>MUTAGENESIS OF ILE-193 AND LEU-196</scope>
</reference>
<reference key="4">
    <citation type="journal article" date="2005" name="Science">
        <title>The transcriptional landscape of the mammalian genome.</title>
        <authorList>
            <person name="Carninci P."/>
            <person name="Kasukawa T."/>
            <person name="Katayama S."/>
            <person name="Gough J."/>
            <person name="Frith M.C."/>
            <person name="Maeda N."/>
            <person name="Oyama R."/>
            <person name="Ravasi T."/>
            <person name="Lenhard B."/>
            <person name="Wells C."/>
            <person name="Kodzius R."/>
            <person name="Shimokawa K."/>
            <person name="Bajic V.B."/>
            <person name="Brenner S.E."/>
            <person name="Batalov S."/>
            <person name="Forrest A.R."/>
            <person name="Zavolan M."/>
            <person name="Davis M.J."/>
            <person name="Wilming L.G."/>
            <person name="Aidinis V."/>
            <person name="Allen J.E."/>
            <person name="Ambesi-Impiombato A."/>
            <person name="Apweiler R."/>
            <person name="Aturaliya R.N."/>
            <person name="Bailey T.L."/>
            <person name="Bansal M."/>
            <person name="Baxter L."/>
            <person name="Beisel K.W."/>
            <person name="Bersano T."/>
            <person name="Bono H."/>
            <person name="Chalk A.M."/>
            <person name="Chiu K.P."/>
            <person name="Choudhary V."/>
            <person name="Christoffels A."/>
            <person name="Clutterbuck D.R."/>
            <person name="Crowe M.L."/>
            <person name="Dalla E."/>
            <person name="Dalrymple B.P."/>
            <person name="de Bono B."/>
            <person name="Della Gatta G."/>
            <person name="di Bernardo D."/>
            <person name="Down T."/>
            <person name="Engstrom P."/>
            <person name="Fagiolini M."/>
            <person name="Faulkner G."/>
            <person name="Fletcher C.F."/>
            <person name="Fukushima T."/>
            <person name="Furuno M."/>
            <person name="Futaki S."/>
            <person name="Gariboldi M."/>
            <person name="Georgii-Hemming P."/>
            <person name="Gingeras T.R."/>
            <person name="Gojobori T."/>
            <person name="Green R.E."/>
            <person name="Gustincich S."/>
            <person name="Harbers M."/>
            <person name="Hayashi Y."/>
            <person name="Hensch T.K."/>
            <person name="Hirokawa N."/>
            <person name="Hill D."/>
            <person name="Huminiecki L."/>
            <person name="Iacono M."/>
            <person name="Ikeo K."/>
            <person name="Iwama A."/>
            <person name="Ishikawa T."/>
            <person name="Jakt M."/>
            <person name="Kanapin A."/>
            <person name="Katoh M."/>
            <person name="Kawasawa Y."/>
            <person name="Kelso J."/>
            <person name="Kitamura H."/>
            <person name="Kitano H."/>
            <person name="Kollias G."/>
            <person name="Krishnan S.P."/>
            <person name="Kruger A."/>
            <person name="Kummerfeld S.K."/>
            <person name="Kurochkin I.V."/>
            <person name="Lareau L.F."/>
            <person name="Lazarevic D."/>
            <person name="Lipovich L."/>
            <person name="Liu J."/>
            <person name="Liuni S."/>
            <person name="McWilliam S."/>
            <person name="Madan Babu M."/>
            <person name="Madera M."/>
            <person name="Marchionni L."/>
            <person name="Matsuda H."/>
            <person name="Matsuzawa S."/>
            <person name="Miki H."/>
            <person name="Mignone F."/>
            <person name="Miyake S."/>
            <person name="Morris K."/>
            <person name="Mottagui-Tabar S."/>
            <person name="Mulder N."/>
            <person name="Nakano N."/>
            <person name="Nakauchi H."/>
            <person name="Ng P."/>
            <person name="Nilsson R."/>
            <person name="Nishiguchi S."/>
            <person name="Nishikawa S."/>
            <person name="Nori F."/>
            <person name="Ohara O."/>
            <person name="Okazaki Y."/>
            <person name="Orlando V."/>
            <person name="Pang K.C."/>
            <person name="Pavan W.J."/>
            <person name="Pavesi G."/>
            <person name="Pesole G."/>
            <person name="Petrovsky N."/>
            <person name="Piazza S."/>
            <person name="Reed J."/>
            <person name="Reid J.F."/>
            <person name="Ring B.Z."/>
            <person name="Ringwald M."/>
            <person name="Rost B."/>
            <person name="Ruan Y."/>
            <person name="Salzberg S.L."/>
            <person name="Sandelin A."/>
            <person name="Schneider C."/>
            <person name="Schoenbach C."/>
            <person name="Sekiguchi K."/>
            <person name="Semple C.A."/>
            <person name="Seno S."/>
            <person name="Sessa L."/>
            <person name="Sheng Y."/>
            <person name="Shibata Y."/>
            <person name="Shimada H."/>
            <person name="Shimada K."/>
            <person name="Silva D."/>
            <person name="Sinclair B."/>
            <person name="Sperling S."/>
            <person name="Stupka E."/>
            <person name="Sugiura K."/>
            <person name="Sultana R."/>
            <person name="Takenaka Y."/>
            <person name="Taki K."/>
            <person name="Tammoja K."/>
            <person name="Tan S.L."/>
            <person name="Tang S."/>
            <person name="Taylor M.S."/>
            <person name="Tegner J."/>
            <person name="Teichmann S.A."/>
            <person name="Ueda H.R."/>
            <person name="van Nimwegen E."/>
            <person name="Verardo R."/>
            <person name="Wei C.L."/>
            <person name="Yagi K."/>
            <person name="Yamanishi H."/>
            <person name="Zabarovsky E."/>
            <person name="Zhu S."/>
            <person name="Zimmer A."/>
            <person name="Hide W."/>
            <person name="Bult C."/>
            <person name="Grimmond S.M."/>
            <person name="Teasdale R.D."/>
            <person name="Liu E.T."/>
            <person name="Brusic V."/>
            <person name="Quackenbush J."/>
            <person name="Wahlestedt C."/>
            <person name="Mattick J.S."/>
            <person name="Hume D.A."/>
            <person name="Kai C."/>
            <person name="Sasaki D."/>
            <person name="Tomaru Y."/>
            <person name="Fukuda S."/>
            <person name="Kanamori-Katayama M."/>
            <person name="Suzuki M."/>
            <person name="Aoki J."/>
            <person name="Arakawa T."/>
            <person name="Iida J."/>
            <person name="Imamura K."/>
            <person name="Itoh M."/>
            <person name="Kato T."/>
            <person name="Kawaji H."/>
            <person name="Kawagashira N."/>
            <person name="Kawashima T."/>
            <person name="Kojima M."/>
            <person name="Kondo S."/>
            <person name="Konno H."/>
            <person name="Nakano K."/>
            <person name="Ninomiya N."/>
            <person name="Nishio T."/>
            <person name="Okada M."/>
            <person name="Plessy C."/>
            <person name="Shibata K."/>
            <person name="Shiraki T."/>
            <person name="Suzuki S."/>
            <person name="Tagami M."/>
            <person name="Waki K."/>
            <person name="Watahiki A."/>
            <person name="Okamura-Oho Y."/>
            <person name="Suzuki H."/>
            <person name="Kawai J."/>
            <person name="Hayashizaki Y."/>
        </authorList>
    </citation>
    <scope>NUCLEOTIDE SEQUENCE [LARGE SCALE MRNA] (ISOFORM 1)</scope>
    <source>
        <strain>C57BL/6J</strain>
        <tissue>Embryo</tissue>
    </source>
</reference>
<reference key="5">
    <citation type="journal article" date="2004" name="Genome Res.">
        <title>The status, quality, and expansion of the NIH full-length cDNA project: the Mammalian Gene Collection (MGC).</title>
        <authorList>
            <consortium name="The MGC Project Team"/>
        </authorList>
    </citation>
    <scope>NUCLEOTIDE SEQUENCE [LARGE SCALE MRNA] (ISOFORM 2)</scope>
    <source>
        <strain>Czech II</strain>
        <tissue>Mammary tumor</tissue>
    </source>
</reference>
<reference key="6">
    <citation type="journal article" date="1998" name="Mol. Cell. Biol.">
        <title>Point mutations in the WD40 domain of Eed block its interaction with Ezh2.</title>
        <authorList>
            <person name="Denisenko O.N."/>
            <person name="Shnyreva M."/>
            <person name="Suzuki H."/>
            <person name="Bomsztyk K."/>
        </authorList>
    </citation>
    <scope>FUNCTION</scope>
    <scope>INTERACTION WITH EZH2</scope>
    <scope>MUTAGENESIS OF ILE-193 AND LEU-196</scope>
</reference>
<reference key="7">
    <citation type="journal article" date="2001" name="Nat. Genet.">
        <title>Imprinted X inactivation maintained by a mouse Polycomb group gene.</title>
        <authorList>
            <person name="Wang J."/>
            <person name="Mager J."/>
            <person name="Chen Y."/>
            <person name="Schneider E."/>
            <person name="Cross J.C."/>
            <person name="Nagy A."/>
            <person name="Magnuson T."/>
        </authorList>
    </citation>
    <scope>FUNCTION</scope>
    <scope>CHARACTERIZATION OF MUTANTS ASN-193 AND PRO-196</scope>
</reference>
<reference key="8">
    <citation type="journal article" date="2002" name="Curr. Biol.">
        <title>Mitotically stable association of polycomb group proteins Eed and Enx1 with the inactive X chromosome in trophoblast stem cells.</title>
        <authorList>
            <person name="Mak W."/>
            <person name="Baxter J."/>
            <person name="Silva J."/>
            <person name="Newall A.E."/>
            <person name="Otte A.P."/>
            <person name="Brockdorff N."/>
        </authorList>
    </citation>
    <scope>SUBCELLULAR LOCATION</scope>
</reference>
<reference key="9">
    <citation type="journal article" date="2002" name="Mamm. Genome">
        <title>The mouse PcG gene Eed is required for Hox gene repression and extraembryonic development.</title>
        <authorList>
            <person name="Wang J."/>
            <person name="Mager J."/>
            <person name="Schnedier E."/>
            <person name="Magnuson T."/>
        </authorList>
    </citation>
    <scope>FUNCTION</scope>
    <scope>CHARACTERIZATION OF MUTANT ASN-193</scope>
</reference>
<reference key="10">
    <citation type="journal article" date="2003" name="Dev. Cell">
        <title>Establishment of histone H3 methylation on the inactive X chromosome requires transient recruitment of Eed-Enx1 polycomb group complexes.</title>
        <authorList>
            <person name="Silva J."/>
            <person name="Mak W."/>
            <person name="Zvetkova I."/>
            <person name="Appanah R."/>
            <person name="Nesterova T.B."/>
            <person name="Webster Z."/>
            <person name="Peters A.H.F.M."/>
            <person name="Jenuwein T."/>
            <person name="Otte A.P."/>
            <person name="Brockdorff N."/>
        </authorList>
    </citation>
    <scope>FUNCTION</scope>
    <scope>SUBCELLULAR LOCATION</scope>
    <scope>DEVELOPMENTAL STAGE</scope>
</reference>
<reference key="11">
    <citation type="journal article" date="2003" name="Nat. Genet.">
        <title>Genome imprinting regulated by the mouse Polycomb group protein Eed.</title>
        <authorList>
            <person name="Mager J."/>
            <person name="Montgomery N.D."/>
            <person name="de Villena F.P.-M."/>
            <person name="Magnuson T."/>
        </authorList>
    </citation>
    <scope>FUNCTION</scope>
</reference>
<reference key="12">
    <citation type="journal article" date="2003" name="Science">
        <title>Role of histone H3 lysine 27 methylation in X inactivation.</title>
        <authorList>
            <person name="Plath K."/>
            <person name="Fang J."/>
            <person name="Mlynarczyk-Evans S.K."/>
            <person name="Cao R."/>
            <person name="Worringer K.A."/>
            <person name="Wang H."/>
            <person name="de la Cruz C.C."/>
            <person name="Otte A.P."/>
            <person name="Panning B."/>
            <person name="Zhang Y."/>
        </authorList>
    </citation>
    <scope>FUNCTION</scope>
    <scope>SUBCELLULAR LOCATION</scope>
</reference>
<reference key="13">
    <citation type="journal article" date="2004" name="Nat. Genet.">
        <title>Imprinting along the Kcnq1 domain on mouse chromosome 7 involves repressive histone methylation and recruitment of Polycomb group complexes.</title>
        <authorList>
            <person name="Umlauf D."/>
            <person name="Goto Y."/>
            <person name="Cao R."/>
            <person name="Cerqueira F."/>
            <person name="Wagschal A."/>
            <person name="Zhang Y."/>
            <person name="Feil R."/>
        </authorList>
    </citation>
    <scope>FUNCTION</scope>
</reference>
<reference key="14">
    <citation type="journal article" date="2004" name="Science">
        <title>Epigenetic dynamics of imprinted X inactivation during early mouse development.</title>
        <authorList>
            <person name="Okamoto I."/>
            <person name="Otte A.P."/>
            <person name="Allis C.D."/>
            <person name="Reinberg D."/>
            <person name="Heard E."/>
        </authorList>
    </citation>
    <scope>SUBCELLULAR LOCATION</scope>
</reference>
<reference key="15">
    <citation type="journal article" date="2004" name="Science">
        <title>Reactivation of the paternal X chromosome in early mouse embryos.</title>
        <authorList>
            <person name="Mak W."/>
            <person name="Nesterova T.B."/>
            <person name="de Napoles M."/>
            <person name="Appanah R."/>
            <person name="Yamanaka S."/>
            <person name="Otte A.P."/>
            <person name="Brockdorff N."/>
        </authorList>
    </citation>
    <scope>SUBCELLULAR LOCATION</scope>
</reference>
<reference key="16">
    <citation type="journal article" date="2005" name="Curr. Biol.">
        <title>The murine polycomb group protein Eed is required for global histone H3 lysine-27 methylation.</title>
        <authorList>
            <person name="Montgomery N.D."/>
            <person name="Yee D."/>
            <person name="Chen A."/>
            <person name="Kalantry S."/>
            <person name="Chamberlain S.J."/>
            <person name="Otte A.P."/>
            <person name="Magnuson T."/>
        </authorList>
    </citation>
    <scope>FUNCTION</scope>
</reference>
<reference key="17">
    <citation type="journal article" date="2005" name="EMBO Rep.">
        <title>Initiation of epigenetic reprogramming of the X chromosome in somatic nuclei transplanted to a mouse oocyte.</title>
        <authorList>
            <person name="Bao S."/>
            <person name="Miyoshi N."/>
            <person name="Okamoto I."/>
            <person name="Jenuwein T."/>
            <person name="Heard E."/>
            <person name="Azim Surani M."/>
        </authorList>
    </citation>
    <scope>SUBCELLULAR LOCATION</scope>
</reference>
<reference key="18">
    <citation type="journal article" date="2005" name="Proc. Natl. Acad. Sci. U.S.A.">
        <title>Composition and histone substrates of polycomb repressive group complexes change during cellular differentiation.</title>
        <authorList>
            <person name="Kuzmichev A."/>
            <person name="Margueron R."/>
            <person name="Vaquero A."/>
            <person name="Preissner T.S."/>
            <person name="Scher M."/>
            <person name="Kirmizis A."/>
            <person name="Ouyang X."/>
            <person name="Brockdorff N."/>
            <person name="Abate-Shen C."/>
            <person name="Farnham P.J."/>
            <person name="Reinberg D."/>
        </authorList>
    </citation>
    <scope>DEVELOPMENTAL STAGE</scope>
</reference>
<reference key="19">
    <citation type="journal article" date="2005" name="Science">
        <title>Akt-mediated phosphorylation of EZH2 suppresses methylation of lysine 27 in histone H3.</title>
        <authorList>
            <person name="Cha T.-L."/>
            <person name="Zhou B.P."/>
            <person name="Xia W."/>
            <person name="Wu Y."/>
            <person name="Yang C.-C."/>
            <person name="Chen C.-T."/>
            <person name="Ping B."/>
            <person name="Otte A.P."/>
            <person name="Hung M.-C."/>
        </authorList>
    </citation>
    <scope>INTERACTION WITH EZH2</scope>
</reference>
<reference key="20">
    <citation type="journal article" date="2006" name="Genes Dev.">
        <title>Genome-wide mapping of Polycomb target genes unravels their roles in cell fate transitions.</title>
        <authorList>
            <person name="Bracken A.P."/>
            <person name="Dietrich N."/>
            <person name="Pasini D."/>
            <person name="Hansen K.H."/>
            <person name="Helin K."/>
        </authorList>
    </citation>
    <scope>FUNCTION</scope>
</reference>
<reference key="21">
    <citation type="journal article" date="2006" name="Nat. Cell Biol.">
        <title>The Polycomb group protein Eed protects the inactive X-chromosome from differentiation-induced reactivation.</title>
        <authorList>
            <person name="Kalantry S."/>
            <person name="Mills K.C."/>
            <person name="Yee D."/>
            <person name="Otte A.P."/>
            <person name="Panning B."/>
            <person name="Magnuson T."/>
        </authorList>
    </citation>
    <scope>FUNCTION</scope>
    <scope>SUBCELLULAR LOCATION</scope>
</reference>
<reference key="22">
    <citation type="journal article" date="2007" name="J. Biol. Chem.">
        <title>Developmental regulation of Eed complex composition governs a switch in global histone modification in brain.</title>
        <authorList>
            <person name="Kim S.Y."/>
            <person name="Levenson J.M."/>
            <person name="Korsmeyer S."/>
            <person name="Sweatt J.D."/>
            <person name="Schumacher A."/>
        </authorList>
    </citation>
    <scope>FUNCTION</scope>
    <scope>INTERACTION WITH EZH2 AND KMT2A/MLL1</scope>
    <scope>SUBCELLULAR LOCATION</scope>
    <scope>TISSUE SPECIFICITY</scope>
    <scope>MUTAGENESIS OF LEU-196</scope>
</reference>
<reference key="23">
    <citation type="journal article" date="2007" name="J. Mol. Biol.">
        <title>Molecular and functional mapping of EED motifs required for PRC2-dependent histone methylation.</title>
        <authorList>
            <person name="Montgomery N.D."/>
            <person name="Yee D."/>
            <person name="Montgomery S.A."/>
            <person name="Magnuson T."/>
        </authorList>
    </citation>
    <scope>FUNCTION</scope>
    <scope>ALTERNATIVE INITIATION</scope>
    <scope>INTERACTION WITH EZH2</scope>
</reference>
<reference key="24">
    <citation type="journal article" date="2008" name="J. Biol. Chem.">
        <title>STAT3 and Oct-3/4 control histone modification through induction of Eed in embryonic stem cells.</title>
        <authorList>
            <person name="Ura H."/>
            <person name="Usuda M."/>
            <person name="Kinoshita K."/>
            <person name="Sun C."/>
            <person name="Mori K."/>
            <person name="Akagi T."/>
            <person name="Matsuda T."/>
            <person name="Koide H."/>
            <person name="Yokota T."/>
        </authorList>
    </citation>
    <scope>FUNCTION</scope>
    <scope>INDUCTION</scope>
</reference>
<reference key="25">
    <citation type="journal article" date="2008" name="Mol. Cell">
        <title>EZH1 mediates methylation on histone H3 lysine 27 and complements EZH2 in maintaining stem cell identity and executing pluripotency.</title>
        <authorList>
            <person name="Shen X."/>
            <person name="Liu Y."/>
            <person name="Hsu Y.-J."/>
            <person name="Fujiwara Y."/>
            <person name="Kim J."/>
            <person name="Mao X."/>
            <person name="Yuan G.-C."/>
            <person name="Orkin S.H."/>
        </authorList>
    </citation>
    <scope>IDENTIFICATION IN THE PRC2/EED-EZH1 COMPLEX</scope>
</reference>
<reference key="26">
    <citation type="journal article" date="2009" name="Immunity">
        <title>The phagosomal proteome in interferon-gamma-activated macrophages.</title>
        <authorList>
            <person name="Trost M."/>
            <person name="English L."/>
            <person name="Lemieux S."/>
            <person name="Courcelles M."/>
            <person name="Desjardins M."/>
            <person name="Thibault P."/>
        </authorList>
    </citation>
    <scope>IDENTIFICATION BY MASS SPECTROMETRY [LARGE SCALE ANALYSIS]</scope>
</reference>
<reference key="27">
    <citation type="journal article" date="2010" name="Cell">
        <title>A tissue-specific atlas of mouse protein phosphorylation and expression.</title>
        <authorList>
            <person name="Huttlin E.L."/>
            <person name="Jedrychowski M.P."/>
            <person name="Elias J.E."/>
            <person name="Goswami T."/>
            <person name="Rad R."/>
            <person name="Beausoleil S.A."/>
            <person name="Villen J."/>
            <person name="Haas W."/>
            <person name="Sowa M.E."/>
            <person name="Gygi S.P."/>
        </authorList>
    </citation>
    <scope>PHOSPHORYLATION [LARGE SCALE ANALYSIS] AT SER-34</scope>
    <scope>IDENTIFICATION BY MASS SPECTROMETRY [LARGE SCALE ANALYSIS]</scope>
    <source>
        <tissue>Brown adipose tissue</tissue>
        <tissue>Lung</tissue>
        <tissue>Spleen</tissue>
    </source>
</reference>
<reference key="28">
    <citation type="journal article" date="2010" name="Cell Stem Cell">
        <title>Polycomb-like 2 associates with PRC2 and regulates transcriptional networks during mouse embryonic stem cell self-renewal and differentiation.</title>
        <authorList>
            <person name="Walker E."/>
            <person name="Chang W.Y."/>
            <person name="Hunkapiller J."/>
            <person name="Cagney G."/>
            <person name="Garcha K."/>
            <person name="Torchia J."/>
            <person name="Krogan N.J."/>
            <person name="Reiter J.F."/>
            <person name="Stanford W.L."/>
        </authorList>
    </citation>
    <scope>IDENTIFICATION IN THE PRC2 COMPLEX</scope>
</reference>
<reference key="29">
    <citation type="journal article" date="2013" name="Science">
        <title>Circadian gene Bmal1 regulates diurnal oscillations of Ly6C(hi) inflammatory monocytes.</title>
        <authorList>
            <person name="Nguyen K.D."/>
            <person name="Fentress S.J."/>
            <person name="Qiu Y."/>
            <person name="Yun K."/>
            <person name="Cox J.S."/>
            <person name="Chawla A."/>
        </authorList>
    </citation>
    <scope>INTERACTION WITH BMAL1</scope>
</reference>
<reference key="30">
    <citation type="journal article" date="2007" name="Structure">
        <title>Structural basis of EZH2 recognition by EED.</title>
        <authorList>
            <person name="Han Z."/>
            <person name="Xing X."/>
            <person name="Hu M."/>
            <person name="Zhang Y."/>
            <person name="Liu P."/>
            <person name="Chai J."/>
        </authorList>
    </citation>
    <scope>X-RAY CRYSTALLOGRAPHY (1.82 ANGSTROMS) OF 81-441 IN COMPLEX WITH EZH2</scope>
    <scope>MUTAGENESIS OF LEU-246; LEU-315 AND GLY-316</scope>
</reference>
<sequence>MSEREVSTAPAGTDMPAAKKQKLSSDENSNPDLSGDENDDAVSIESGTNTERPDTPTNTPNAPGRKSWGKGKWKSKKCKYSFKCVNSLKEDHNQPLFGVQFNWHSKEGDPLVFATVGSNRVTLYECHSQGEIRLLQSYVDADADENFYTCAWTYDSNTSHPLLAVAGSRGIIRIINPITMQCIKHYVGHGNAINELKFHPRDPNLLLSVSKDHALRLWNIQTDTLVAIFGGVEGHRDEVLSADYDLLGEKIMSCGMDHSLKLWRINSKRMMNAIKESYDYNPNKTNRPFISQKIHFPDFSTRDIHRNYVDCVRWLGDLILSKSCENAIVCWKPGKMEDDIDKIKPSESNVTILGRFDYSQCDIWYMRFSMDFWQKMLALGNQVGKLYVWDLEVEDPHKAKCTTLTHHKCGAAIRQTSFSRDSSILIAVCDDASIWRWDRLR</sequence>
<protein>
    <recommendedName>
        <fullName>Polycomb protein EED</fullName>
    </recommendedName>
</protein>
<evidence type="ECO:0000250" key="1"/>
<evidence type="ECO:0000250" key="2">
    <source>
        <dbReference type="UniProtKB" id="O75530"/>
    </source>
</evidence>
<evidence type="ECO:0000256" key="3">
    <source>
        <dbReference type="SAM" id="MobiDB-lite"/>
    </source>
</evidence>
<evidence type="ECO:0000269" key="4">
    <source>
    </source>
</evidence>
<evidence type="ECO:0000269" key="5">
    <source>
    </source>
</evidence>
<evidence type="ECO:0000269" key="6">
    <source>
    </source>
</evidence>
<evidence type="ECO:0000269" key="7">
    <source>
    </source>
</evidence>
<evidence type="ECO:0000269" key="8">
    <source>
    </source>
</evidence>
<evidence type="ECO:0000269" key="9">
    <source>
    </source>
</evidence>
<evidence type="ECO:0000269" key="10">
    <source>
    </source>
</evidence>
<evidence type="ECO:0000269" key="11">
    <source>
    </source>
</evidence>
<evidence type="ECO:0000269" key="12">
    <source>
    </source>
</evidence>
<evidence type="ECO:0000269" key="13">
    <source>
    </source>
</evidence>
<evidence type="ECO:0000269" key="14">
    <source>
    </source>
</evidence>
<evidence type="ECO:0000269" key="15">
    <source>
    </source>
</evidence>
<evidence type="ECO:0000269" key="16">
    <source>
    </source>
</evidence>
<evidence type="ECO:0000269" key="17">
    <source>
    </source>
</evidence>
<evidence type="ECO:0000269" key="18">
    <source>
    </source>
</evidence>
<evidence type="ECO:0000269" key="19">
    <source>
    </source>
</evidence>
<evidence type="ECO:0000269" key="20">
    <source>
    </source>
</evidence>
<evidence type="ECO:0000269" key="21">
    <source>
    </source>
</evidence>
<evidence type="ECO:0000269" key="22">
    <source>
    </source>
</evidence>
<evidence type="ECO:0000269" key="23">
    <source>
    </source>
</evidence>
<evidence type="ECO:0000269" key="24">
    <source>
    </source>
</evidence>
<evidence type="ECO:0000303" key="25">
    <source>
    </source>
</evidence>
<evidence type="ECO:0000303" key="26">
    <source>
    </source>
</evidence>
<evidence type="ECO:0000303" key="27">
    <source>
    </source>
</evidence>
<evidence type="ECO:0000305" key="28"/>
<evidence type="ECO:0000305" key="29">
    <source>
    </source>
</evidence>
<evidence type="ECO:0007744" key="30">
    <source>
    </source>
</evidence>
<evidence type="ECO:0007829" key="31">
    <source>
        <dbReference type="PDB" id="2QXV"/>
    </source>
</evidence>